<accession>Q9S5B5</accession>
<accession>B8DRD3</accession>
<comment type="function">
    <text evidence="1">Produces ATP from ADP in the presence of a proton gradient across the membrane.</text>
</comment>
<comment type="subunit">
    <text>F-type ATPases have 2 components, CF(1) - the catalytic core - and CF(0) - the membrane proton channel. CF(1) has five subunits: alpha(3), beta(3), gamma(1), delta(1), epsilon(1). CF(0) has three main subunits: a, b and c.</text>
</comment>
<comment type="subcellular location">
    <subcellularLocation>
        <location evidence="1">Cell inner membrane</location>
        <topology evidence="1">Peripheral membrane protein</topology>
    </subcellularLocation>
</comment>
<comment type="similarity">
    <text evidence="1">Belongs to the ATPase epsilon chain family.</text>
</comment>
<organism>
    <name type="scientific">Nitratidesulfovibrio vulgaris (strain DSM 19637 / Miyazaki F)</name>
    <name type="common">Desulfovibrio vulgaris</name>
    <dbReference type="NCBI Taxonomy" id="883"/>
    <lineage>
        <taxon>Bacteria</taxon>
        <taxon>Pseudomonadati</taxon>
        <taxon>Thermodesulfobacteriota</taxon>
        <taxon>Desulfovibrionia</taxon>
        <taxon>Desulfovibrionales</taxon>
        <taxon>Desulfovibrionaceae</taxon>
        <taxon>Nitratidesulfovibrio</taxon>
    </lineage>
</organism>
<dbReference type="EMBL" id="AB022018">
    <property type="protein sequence ID" value="BAA83614.1"/>
    <property type="molecule type" value="Genomic_DNA"/>
</dbReference>
<dbReference type="EMBL" id="CP001197">
    <property type="protein sequence ID" value="ACL09770.1"/>
    <property type="molecule type" value="Genomic_DNA"/>
</dbReference>
<dbReference type="SMR" id="Q9S5B5"/>
<dbReference type="STRING" id="883.DvMF_2832"/>
<dbReference type="KEGG" id="dvm:DvMF_2832"/>
<dbReference type="eggNOG" id="COG0355">
    <property type="taxonomic scope" value="Bacteria"/>
</dbReference>
<dbReference type="HOGENOM" id="CLU_084338_1_3_7"/>
<dbReference type="OrthoDB" id="9799969at2"/>
<dbReference type="GO" id="GO:0005886">
    <property type="term" value="C:plasma membrane"/>
    <property type="evidence" value="ECO:0007669"/>
    <property type="project" value="UniProtKB-SubCell"/>
</dbReference>
<dbReference type="GO" id="GO:0045259">
    <property type="term" value="C:proton-transporting ATP synthase complex"/>
    <property type="evidence" value="ECO:0007669"/>
    <property type="project" value="UniProtKB-KW"/>
</dbReference>
<dbReference type="GO" id="GO:0005524">
    <property type="term" value="F:ATP binding"/>
    <property type="evidence" value="ECO:0007669"/>
    <property type="project" value="UniProtKB-UniRule"/>
</dbReference>
<dbReference type="GO" id="GO:0046933">
    <property type="term" value="F:proton-transporting ATP synthase activity, rotational mechanism"/>
    <property type="evidence" value="ECO:0007669"/>
    <property type="project" value="UniProtKB-UniRule"/>
</dbReference>
<dbReference type="CDD" id="cd12152">
    <property type="entry name" value="F1-ATPase_delta"/>
    <property type="match status" value="1"/>
</dbReference>
<dbReference type="Gene3D" id="1.20.5.440">
    <property type="entry name" value="ATP synthase delta/epsilon subunit, C-terminal domain"/>
    <property type="match status" value="1"/>
</dbReference>
<dbReference type="Gene3D" id="2.60.15.10">
    <property type="entry name" value="F0F1 ATP synthase delta/epsilon subunit, N-terminal"/>
    <property type="match status" value="1"/>
</dbReference>
<dbReference type="HAMAP" id="MF_00530">
    <property type="entry name" value="ATP_synth_epsil_bac"/>
    <property type="match status" value="1"/>
</dbReference>
<dbReference type="InterPro" id="IPR036794">
    <property type="entry name" value="ATP_F1_dsu/esu_C_sf"/>
</dbReference>
<dbReference type="InterPro" id="IPR001469">
    <property type="entry name" value="ATP_synth_F1_dsu/esu"/>
</dbReference>
<dbReference type="InterPro" id="IPR020546">
    <property type="entry name" value="ATP_synth_F1_dsu/esu_N"/>
</dbReference>
<dbReference type="InterPro" id="IPR020547">
    <property type="entry name" value="ATP_synth_F1_esu_C"/>
</dbReference>
<dbReference type="InterPro" id="IPR036771">
    <property type="entry name" value="ATPsynth_dsu/esu_N"/>
</dbReference>
<dbReference type="NCBIfam" id="TIGR01216">
    <property type="entry name" value="ATP_synt_epsi"/>
    <property type="match status" value="1"/>
</dbReference>
<dbReference type="NCBIfam" id="NF001846">
    <property type="entry name" value="PRK00571.1-3"/>
    <property type="match status" value="1"/>
</dbReference>
<dbReference type="NCBIfam" id="NF009980">
    <property type="entry name" value="PRK13446.1"/>
    <property type="match status" value="1"/>
</dbReference>
<dbReference type="PANTHER" id="PTHR13822">
    <property type="entry name" value="ATP SYNTHASE DELTA/EPSILON CHAIN"/>
    <property type="match status" value="1"/>
</dbReference>
<dbReference type="PANTHER" id="PTHR13822:SF10">
    <property type="entry name" value="ATP SYNTHASE EPSILON CHAIN, CHLOROPLASTIC"/>
    <property type="match status" value="1"/>
</dbReference>
<dbReference type="Pfam" id="PF00401">
    <property type="entry name" value="ATP-synt_DE"/>
    <property type="match status" value="1"/>
</dbReference>
<dbReference type="Pfam" id="PF02823">
    <property type="entry name" value="ATP-synt_DE_N"/>
    <property type="match status" value="1"/>
</dbReference>
<dbReference type="SUPFAM" id="SSF46604">
    <property type="entry name" value="Epsilon subunit of F1F0-ATP synthase C-terminal domain"/>
    <property type="match status" value="1"/>
</dbReference>
<dbReference type="SUPFAM" id="SSF51344">
    <property type="entry name" value="Epsilon subunit of F1F0-ATP synthase N-terminal domain"/>
    <property type="match status" value="1"/>
</dbReference>
<name>ATPE_NITV9</name>
<reference key="1">
    <citation type="journal article" date="2000" name="J. Bacteriol.">
        <title>Evidence for the presence of an F-type ATP synthase involved in sulfate respiration in Desulfovibrio vulgaris.</title>
        <authorList>
            <person name="Ozawa K."/>
            <person name="Meikari T."/>
            <person name="Motohashi K."/>
            <person name="Yoshida M."/>
            <person name="Akutsu H."/>
        </authorList>
    </citation>
    <scope>NUCLEOTIDE SEQUENCE [GENOMIC DNA]</scope>
</reference>
<reference key="2">
    <citation type="submission" date="2008-10" db="EMBL/GenBank/DDBJ databases">
        <title>Complete sequence of Desulfovibrio vulgaris str. 'Miyazaki F'.</title>
        <authorList>
            <person name="Lucas S."/>
            <person name="Copeland A."/>
            <person name="Lapidus A."/>
            <person name="Glavina del Rio T."/>
            <person name="Dalin E."/>
            <person name="Tice H."/>
            <person name="Bruce D."/>
            <person name="Goodwin L."/>
            <person name="Pitluck S."/>
            <person name="Sims D."/>
            <person name="Brettin T."/>
            <person name="Detter J.C."/>
            <person name="Han C."/>
            <person name="Larimer F."/>
            <person name="Land M."/>
            <person name="Hauser L."/>
            <person name="Kyrpides N."/>
            <person name="Mikhailova N."/>
            <person name="Hazen T.C."/>
            <person name="Richardson P."/>
        </authorList>
    </citation>
    <scope>NUCLEOTIDE SEQUENCE [LARGE SCALE GENOMIC DNA]</scope>
    <source>
        <strain>DSM 19637 / Miyazaki F</strain>
    </source>
</reference>
<protein>
    <recommendedName>
        <fullName evidence="1">ATP synthase epsilon chain</fullName>
    </recommendedName>
    <alternativeName>
        <fullName evidence="1">ATP synthase F1 sector epsilon subunit</fullName>
    </alternativeName>
    <alternativeName>
        <fullName evidence="1">F-ATPase epsilon subunit</fullName>
    </alternativeName>
</protein>
<keyword id="KW-0066">ATP synthesis</keyword>
<keyword id="KW-0997">Cell inner membrane</keyword>
<keyword id="KW-1003">Cell membrane</keyword>
<keyword id="KW-0139">CF(1)</keyword>
<keyword id="KW-0375">Hydrogen ion transport</keyword>
<keyword id="KW-0406">Ion transport</keyword>
<keyword id="KW-0472">Membrane</keyword>
<keyword id="KW-0813">Transport</keyword>
<evidence type="ECO:0000255" key="1">
    <source>
        <dbReference type="HAMAP-Rule" id="MF_00530"/>
    </source>
</evidence>
<proteinExistence type="inferred from homology"/>
<feature type="chain" id="PRO_0000188131" description="ATP synthase epsilon chain">
    <location>
        <begin position="1"/>
        <end position="134"/>
    </location>
</feature>
<sequence length="134" mass="14769">MEKSLHLEIVTPDRLVLSEKVDYVGAPGYEGEFGILPNHIPFLSALNIGSLYYKAGGKTHWIFVSGGFAEVSDNKVTVLAESAERAEDIDLERARKAKERAEQRLAQAKEKLDSARAQAALQRAMARMRVRGAA</sequence>
<gene>
    <name evidence="1" type="primary">atpC</name>
    <name type="ordered locus">DvMF_2832</name>
</gene>